<comment type="function">
    <text evidence="2">May catalyze the biosynthesis of cardiolipin from phosphatidylglycerol (PG) and CDP-diacylglycerol. May also catalyze the synthesis of phosphatidylinositol.</text>
</comment>
<comment type="catalytic activity">
    <reaction evidence="2">
        <text>a CDP-1,2-diacyl-sn-glycerol + a 1,2-diacyl-sn-glycero-3-phospho-(1'-sn-glycerol) = a cardiolipin + CMP + H(+)</text>
        <dbReference type="Rhea" id="RHEA:32931"/>
        <dbReference type="ChEBI" id="CHEBI:15378"/>
        <dbReference type="ChEBI" id="CHEBI:58332"/>
        <dbReference type="ChEBI" id="CHEBI:60377"/>
        <dbReference type="ChEBI" id="CHEBI:62237"/>
        <dbReference type="ChEBI" id="CHEBI:64716"/>
        <dbReference type="EC" id="2.7.8.41"/>
    </reaction>
</comment>
<comment type="catalytic activity">
    <reaction evidence="2">
        <text>1,2-dihexadecanoyl-sn-glycero-3-CDP + myo-inositol = 1,2-dihexadecanoyl-sn-glycero-3-phospho-(1D-myo-inositol) + CMP + H(+)</text>
        <dbReference type="Rhea" id="RHEA:40411"/>
        <dbReference type="ChEBI" id="CHEBI:15378"/>
        <dbReference type="ChEBI" id="CHEBI:17268"/>
        <dbReference type="ChEBI" id="CHEBI:60377"/>
        <dbReference type="ChEBI" id="CHEBI:72835"/>
        <dbReference type="ChEBI" id="CHEBI:77190"/>
    </reaction>
    <physiologicalReaction direction="left-to-right" evidence="2">
        <dbReference type="Rhea" id="RHEA:40412"/>
    </physiologicalReaction>
</comment>
<comment type="pathway">
    <text evidence="4">Lipid metabolism; phospholipid metabolism.</text>
</comment>
<comment type="subcellular location">
    <subcellularLocation>
        <location evidence="3">Cell membrane</location>
        <topology evidence="3">Multi-pass membrane protein</topology>
    </subcellularLocation>
</comment>
<comment type="similarity">
    <text evidence="3">Belongs to the CDP-alcohol phosphatidyltransferase class-I family.</text>
</comment>
<evidence type="ECO:0000255" key="1"/>
<evidence type="ECO:0000303" key="2">
    <source>
    </source>
</evidence>
<evidence type="ECO:0000305" key="3"/>
<evidence type="ECO:0000305" key="4">
    <source>
    </source>
</evidence>
<evidence type="ECO:0000312" key="5">
    <source>
        <dbReference type="EMBL" id="CCP44588.1"/>
    </source>
</evidence>
<proteinExistence type="evidence at protein level"/>
<reference key="1">
    <citation type="journal article" date="1998" name="Nature">
        <title>Deciphering the biology of Mycobacterium tuberculosis from the complete genome sequence.</title>
        <authorList>
            <person name="Cole S.T."/>
            <person name="Brosch R."/>
            <person name="Parkhill J."/>
            <person name="Garnier T."/>
            <person name="Churcher C.M."/>
            <person name="Harris D.E."/>
            <person name="Gordon S.V."/>
            <person name="Eiglmeier K."/>
            <person name="Gas S."/>
            <person name="Barry C.E. III"/>
            <person name="Tekaia F."/>
            <person name="Badcock K."/>
            <person name="Basham D."/>
            <person name="Brown D."/>
            <person name="Chillingworth T."/>
            <person name="Connor R."/>
            <person name="Davies R.M."/>
            <person name="Devlin K."/>
            <person name="Feltwell T."/>
            <person name="Gentles S."/>
            <person name="Hamlin N."/>
            <person name="Holroyd S."/>
            <person name="Hornsby T."/>
            <person name="Jagels K."/>
            <person name="Krogh A."/>
            <person name="McLean J."/>
            <person name="Moule S."/>
            <person name="Murphy L.D."/>
            <person name="Oliver S."/>
            <person name="Osborne J."/>
            <person name="Quail M.A."/>
            <person name="Rajandream M.A."/>
            <person name="Rogers J."/>
            <person name="Rutter S."/>
            <person name="Seeger K."/>
            <person name="Skelton S."/>
            <person name="Squares S."/>
            <person name="Squares R."/>
            <person name="Sulston J.E."/>
            <person name="Taylor K."/>
            <person name="Whitehead S."/>
            <person name="Barrell B.G."/>
        </authorList>
    </citation>
    <scope>NUCLEOTIDE SEQUENCE [LARGE SCALE GENOMIC DNA]</scope>
    <source>
        <strain>ATCC 25618 / H37Rv</strain>
    </source>
</reference>
<reference key="2">
    <citation type="journal article" date="2011" name="Mol. Cell. Proteomics">
        <title>Proteogenomic analysis of Mycobacterium tuberculosis by high resolution mass spectrometry.</title>
        <authorList>
            <person name="Kelkar D.S."/>
            <person name="Kumar D."/>
            <person name="Kumar P."/>
            <person name="Balakrishnan L."/>
            <person name="Muthusamy B."/>
            <person name="Yadav A.K."/>
            <person name="Shrivastava P."/>
            <person name="Marimuthu A."/>
            <person name="Anand S."/>
            <person name="Sundaram H."/>
            <person name="Kingsbury R."/>
            <person name="Harsha H.C."/>
            <person name="Nair B."/>
            <person name="Prasad T.S."/>
            <person name="Chauhan D.S."/>
            <person name="Katoch K."/>
            <person name="Katoch V.M."/>
            <person name="Kumar P."/>
            <person name="Chaerkady R."/>
            <person name="Ramachandran S."/>
            <person name="Dash D."/>
            <person name="Pandey A."/>
        </authorList>
    </citation>
    <scope>IDENTIFICATION BY MASS SPECTROMETRY [LARGE SCALE ANALYSIS]</scope>
    <source>
        <strain>ATCC 25618 / H37Rv</strain>
    </source>
</reference>
<reference key="3">
    <citation type="journal article" date="2000" name="J. Biol. Chem.">
        <title>Phosphatidylinositol is an essential phospholipid of mycobacteria.</title>
        <authorList>
            <person name="Jackson M."/>
            <person name="Crick D.C."/>
            <person name="Brennan P.J."/>
        </authorList>
    </citation>
    <scope>FUNCTION</scope>
    <scope>CATALYTIC ACTIVITY</scope>
    <scope>PATHWAY</scope>
    <source>
        <strain>H37Rv</strain>
    </source>
</reference>
<keyword id="KW-1003">Cell membrane</keyword>
<keyword id="KW-0444">Lipid biosynthesis</keyword>
<keyword id="KW-0443">Lipid metabolism</keyword>
<keyword id="KW-0472">Membrane</keyword>
<keyword id="KW-0594">Phospholipid biosynthesis</keyword>
<keyword id="KW-1208">Phospholipid metabolism</keyword>
<keyword id="KW-1185">Reference proteome</keyword>
<keyword id="KW-0808">Transferase</keyword>
<keyword id="KW-0812">Transmembrane</keyword>
<keyword id="KW-1133">Transmembrane helix</keyword>
<accession>P9WPG5</accession>
<accession>L0T801</accession>
<accession>P63753</accession>
<accession>Q50611</accession>
<name>CRLS_MYCTU</name>
<organism>
    <name type="scientific">Mycobacterium tuberculosis (strain ATCC 25618 / H37Rv)</name>
    <dbReference type="NCBI Taxonomy" id="83332"/>
    <lineage>
        <taxon>Bacteria</taxon>
        <taxon>Bacillati</taxon>
        <taxon>Actinomycetota</taxon>
        <taxon>Actinomycetes</taxon>
        <taxon>Mycobacteriales</taxon>
        <taxon>Mycobacteriaceae</taxon>
        <taxon>Mycobacterium</taxon>
        <taxon>Mycobacterium tuberculosis complex</taxon>
    </lineage>
</organism>
<protein>
    <recommendedName>
        <fullName evidence="2">Putative cardiolipin synthase</fullName>
        <ecNumber evidence="2">2.7.8.41</ecNumber>
    </recommendedName>
</protein>
<gene>
    <name evidence="2 5" type="primary">pgsA2</name>
    <name type="ordered locus">Rv1822</name>
    <name type="ORF">MTCY1A11.21c</name>
</gene>
<sequence length="209" mass="22911">MEPVLTQNRVLTVPNMLSVIRLALIPAFVYVVLSAHANGWGVAILVFSGVSDWADGKIARLLNQSSRLGALLDPAVDRLYMVTVPIVFGLSGIVPWWFVLTLLTRDALLAGTLPLLWSRGLSALPVTYVGKAATFGFMVGFPTILLGQCDPLWSHVLLACGWAFLIWGMYAYLWAFVLYAVQMTMVVRQMPKLKGRAHRPAAQNAGERG</sequence>
<dbReference type="EC" id="2.7.8.41" evidence="2"/>
<dbReference type="EMBL" id="AL123456">
    <property type="protein sequence ID" value="CCP44588.1"/>
    <property type="molecule type" value="Genomic_DNA"/>
</dbReference>
<dbReference type="PIR" id="G70720">
    <property type="entry name" value="G70720"/>
</dbReference>
<dbReference type="RefSeq" id="NP_216338.1">
    <property type="nucleotide sequence ID" value="NC_000962.3"/>
</dbReference>
<dbReference type="RefSeq" id="WP_003409227.1">
    <property type="nucleotide sequence ID" value="NZ_NVQJ01000013.1"/>
</dbReference>
<dbReference type="SMR" id="P9WPG5"/>
<dbReference type="STRING" id="83332.Rv1822"/>
<dbReference type="SwissLipids" id="SLP:000001157"/>
<dbReference type="PaxDb" id="83332-Rv1822"/>
<dbReference type="DNASU" id="885126"/>
<dbReference type="GeneID" id="885126"/>
<dbReference type="KEGG" id="mtu:Rv1822"/>
<dbReference type="KEGG" id="mtv:RVBD_1822"/>
<dbReference type="TubercuList" id="Rv1822"/>
<dbReference type="eggNOG" id="COG0558">
    <property type="taxonomic scope" value="Bacteria"/>
</dbReference>
<dbReference type="InParanoid" id="P9WPG5"/>
<dbReference type="OrthoDB" id="9796672at2"/>
<dbReference type="PhylomeDB" id="P9WPG5"/>
<dbReference type="UniPathway" id="UPA00085"/>
<dbReference type="Proteomes" id="UP000001584">
    <property type="component" value="Chromosome"/>
</dbReference>
<dbReference type="GO" id="GO:0005886">
    <property type="term" value="C:plasma membrane"/>
    <property type="evidence" value="ECO:0007669"/>
    <property type="project" value="UniProtKB-SubCell"/>
</dbReference>
<dbReference type="GO" id="GO:0043337">
    <property type="term" value="F:cardiolipin synthase (CMP-forming)"/>
    <property type="evidence" value="ECO:0007669"/>
    <property type="project" value="UniProtKB-EC"/>
</dbReference>
<dbReference type="GO" id="GO:0008444">
    <property type="term" value="F:CDP-diacylglycerol-glycerol-3-phosphate 3-phosphatidyltransferase activity"/>
    <property type="evidence" value="ECO:0000250"/>
    <property type="project" value="UniProtKB"/>
</dbReference>
<dbReference type="GO" id="GO:0046474">
    <property type="term" value="P:glycerophospholipid biosynthetic process"/>
    <property type="evidence" value="ECO:0000318"/>
    <property type="project" value="GO_Central"/>
</dbReference>
<dbReference type="GO" id="GO:0008654">
    <property type="term" value="P:phospholipid biosynthetic process"/>
    <property type="evidence" value="ECO:0000250"/>
    <property type="project" value="UniProtKB"/>
</dbReference>
<dbReference type="Gene3D" id="1.20.120.1760">
    <property type="match status" value="1"/>
</dbReference>
<dbReference type="InterPro" id="IPR050324">
    <property type="entry name" value="CDP-alcohol_PTase-I"/>
</dbReference>
<dbReference type="InterPro" id="IPR000462">
    <property type="entry name" value="CDP-OH_P_trans"/>
</dbReference>
<dbReference type="InterPro" id="IPR043130">
    <property type="entry name" value="CDP-OH_PTrfase_TM_dom"/>
</dbReference>
<dbReference type="InterPro" id="IPR048254">
    <property type="entry name" value="CDP_ALCOHOL_P_TRANSF_CS"/>
</dbReference>
<dbReference type="InterPro" id="IPR004570">
    <property type="entry name" value="Phosphatidylglycerol_P_synth"/>
</dbReference>
<dbReference type="PANTHER" id="PTHR14269:SF62">
    <property type="entry name" value="CDP-DIACYLGLYCEROL--GLYCEROL-3-PHOSPHATE 3-PHOSPHATIDYLTRANSFERASE 1, CHLOROPLASTIC"/>
    <property type="match status" value="1"/>
</dbReference>
<dbReference type="PANTHER" id="PTHR14269">
    <property type="entry name" value="CDP-DIACYLGLYCEROL--GLYCEROL-3-PHOSPHATE 3-PHOSPHATIDYLTRANSFERASE-RELATED"/>
    <property type="match status" value="1"/>
</dbReference>
<dbReference type="Pfam" id="PF01066">
    <property type="entry name" value="CDP-OH_P_transf"/>
    <property type="match status" value="1"/>
</dbReference>
<dbReference type="PIRSF" id="PIRSF000847">
    <property type="entry name" value="Phos_ph_gly_syn"/>
    <property type="match status" value="1"/>
</dbReference>
<dbReference type="PROSITE" id="PS00379">
    <property type="entry name" value="CDP_ALCOHOL_P_TRANSF"/>
    <property type="match status" value="1"/>
</dbReference>
<feature type="chain" id="PRO_0000056779" description="Putative cardiolipin synthase">
    <location>
        <begin position="1"/>
        <end position="209"/>
    </location>
</feature>
<feature type="transmembrane region" description="Helical" evidence="1">
    <location>
        <begin position="27"/>
        <end position="47"/>
    </location>
</feature>
<feature type="transmembrane region" description="Helical" evidence="1">
    <location>
        <begin position="82"/>
        <end position="102"/>
    </location>
</feature>
<feature type="transmembrane region" description="Helical" evidence="1">
    <location>
        <begin position="126"/>
        <end position="146"/>
    </location>
</feature>
<feature type="transmembrane region" description="Helical" evidence="1">
    <location>
        <begin position="157"/>
        <end position="177"/>
    </location>
</feature>